<evidence type="ECO:0000255" key="1">
    <source>
        <dbReference type="HAMAP-Rule" id="MF_01382"/>
    </source>
</evidence>
<organism>
    <name type="scientific">Trichodesmium erythraeum (strain IMS101)</name>
    <dbReference type="NCBI Taxonomy" id="203124"/>
    <lineage>
        <taxon>Bacteria</taxon>
        <taxon>Bacillati</taxon>
        <taxon>Cyanobacteriota</taxon>
        <taxon>Cyanophyceae</taxon>
        <taxon>Oscillatoriophycideae</taxon>
        <taxon>Oscillatoriales</taxon>
        <taxon>Microcoleaceae</taxon>
        <taxon>Trichodesmium</taxon>
    </lineage>
</organism>
<accession>Q10VW7</accession>
<comment type="function">
    <text evidence="1">Part of the Sec protein translocase complex. Interacts with the SecYEG preprotein conducting channel. Has a central role in coupling the hydrolysis of ATP to the transfer of proteins into and across the cell membrane, serving as an ATP-driven molecular motor driving the stepwise translocation of polypeptide chains across the membrane.</text>
</comment>
<comment type="function">
    <text evidence="1">Probably participates in protein translocation into and across both the cytoplasmic and thylakoid membranes in cyanobacterial cells.</text>
</comment>
<comment type="catalytic activity">
    <reaction evidence="1">
        <text>ATP + H2O + cellular proteinSide 1 = ADP + phosphate + cellular proteinSide 2.</text>
        <dbReference type="EC" id="7.4.2.8"/>
    </reaction>
</comment>
<comment type="subunit">
    <text evidence="1">Monomer and homodimer. Part of the essential Sec protein translocation apparatus which comprises SecA, SecYEG and auxiliary proteins SecDF. Other proteins may also be involved.</text>
</comment>
<comment type="subcellular location">
    <subcellularLocation>
        <location evidence="1">Cell inner membrane</location>
        <topology evidence="1">Peripheral membrane protein</topology>
        <orientation evidence="1">Cytoplasmic side</orientation>
    </subcellularLocation>
    <subcellularLocation>
        <location evidence="1">Cellular thylakoid membrane</location>
        <topology evidence="1">Peripheral membrane protein</topology>
        <orientation evidence="1">Cytoplasmic side</orientation>
    </subcellularLocation>
    <subcellularLocation>
        <location evidence="1">Cytoplasm</location>
    </subcellularLocation>
</comment>
<comment type="similarity">
    <text evidence="1">Belongs to the SecA family.</text>
</comment>
<gene>
    <name evidence="1" type="primary">secA</name>
    <name type="ordered locus">Tery_4635</name>
</gene>
<keyword id="KW-0067">ATP-binding</keyword>
<keyword id="KW-0997">Cell inner membrane</keyword>
<keyword id="KW-1003">Cell membrane</keyword>
<keyword id="KW-0963">Cytoplasm</keyword>
<keyword id="KW-0472">Membrane</keyword>
<keyword id="KW-0547">Nucleotide-binding</keyword>
<keyword id="KW-0653">Protein transport</keyword>
<keyword id="KW-0793">Thylakoid</keyword>
<keyword id="KW-1278">Translocase</keyword>
<keyword id="KW-0811">Translocation</keyword>
<keyword id="KW-0813">Transport</keyword>
<protein>
    <recommendedName>
        <fullName evidence="1">Protein translocase subunit SecA</fullName>
        <ecNumber evidence="1">7.4.2.8</ecNumber>
    </recommendedName>
</protein>
<dbReference type="EC" id="7.4.2.8" evidence="1"/>
<dbReference type="EMBL" id="CP000393">
    <property type="protein sequence ID" value="ABG53607.1"/>
    <property type="molecule type" value="Genomic_DNA"/>
</dbReference>
<dbReference type="RefSeq" id="WP_011613924.1">
    <property type="nucleotide sequence ID" value="NC_008312.1"/>
</dbReference>
<dbReference type="SMR" id="Q10VW7"/>
<dbReference type="STRING" id="203124.Tery_4635"/>
<dbReference type="KEGG" id="ter:Tery_4635"/>
<dbReference type="eggNOG" id="COG0653">
    <property type="taxonomic scope" value="Bacteria"/>
</dbReference>
<dbReference type="HOGENOM" id="CLU_005314_3_0_3"/>
<dbReference type="OrthoDB" id="9805579at2"/>
<dbReference type="GO" id="GO:0031522">
    <property type="term" value="C:cell envelope Sec protein transport complex"/>
    <property type="evidence" value="ECO:0007669"/>
    <property type="project" value="TreeGrafter"/>
</dbReference>
<dbReference type="GO" id="GO:0005829">
    <property type="term" value="C:cytosol"/>
    <property type="evidence" value="ECO:0007669"/>
    <property type="project" value="TreeGrafter"/>
</dbReference>
<dbReference type="GO" id="GO:0031676">
    <property type="term" value="C:plasma membrane-derived thylakoid membrane"/>
    <property type="evidence" value="ECO:0007669"/>
    <property type="project" value="UniProtKB-SubCell"/>
</dbReference>
<dbReference type="GO" id="GO:0005524">
    <property type="term" value="F:ATP binding"/>
    <property type="evidence" value="ECO:0007669"/>
    <property type="project" value="UniProtKB-UniRule"/>
</dbReference>
<dbReference type="GO" id="GO:0008564">
    <property type="term" value="F:protein-exporting ATPase activity"/>
    <property type="evidence" value="ECO:0007669"/>
    <property type="project" value="UniProtKB-EC"/>
</dbReference>
<dbReference type="GO" id="GO:0065002">
    <property type="term" value="P:intracellular protein transmembrane transport"/>
    <property type="evidence" value="ECO:0007669"/>
    <property type="project" value="UniProtKB-UniRule"/>
</dbReference>
<dbReference type="GO" id="GO:0017038">
    <property type="term" value="P:protein import"/>
    <property type="evidence" value="ECO:0007669"/>
    <property type="project" value="InterPro"/>
</dbReference>
<dbReference type="GO" id="GO:0006605">
    <property type="term" value="P:protein targeting"/>
    <property type="evidence" value="ECO:0007669"/>
    <property type="project" value="UniProtKB-UniRule"/>
</dbReference>
<dbReference type="GO" id="GO:0043952">
    <property type="term" value="P:protein transport by the Sec complex"/>
    <property type="evidence" value="ECO:0007669"/>
    <property type="project" value="TreeGrafter"/>
</dbReference>
<dbReference type="CDD" id="cd17928">
    <property type="entry name" value="DEXDc_SecA"/>
    <property type="match status" value="1"/>
</dbReference>
<dbReference type="CDD" id="cd18803">
    <property type="entry name" value="SF2_C_secA"/>
    <property type="match status" value="1"/>
</dbReference>
<dbReference type="FunFam" id="3.90.1440.10:FF:000003">
    <property type="entry name" value="Preprotein translocase SecA subunit"/>
    <property type="match status" value="1"/>
</dbReference>
<dbReference type="FunFam" id="3.40.50.300:FF:000429">
    <property type="entry name" value="Preprotein translocase subunit SecA"/>
    <property type="match status" value="1"/>
</dbReference>
<dbReference type="FunFam" id="1.10.3060.10:FF:000003">
    <property type="entry name" value="Protein translocase subunit SecA"/>
    <property type="match status" value="1"/>
</dbReference>
<dbReference type="FunFam" id="3.40.50.300:FF:000334">
    <property type="entry name" value="Protein translocase subunit SecA"/>
    <property type="match status" value="1"/>
</dbReference>
<dbReference type="Gene3D" id="1.10.3060.10">
    <property type="entry name" value="Helical scaffold and wing domains of SecA"/>
    <property type="match status" value="1"/>
</dbReference>
<dbReference type="Gene3D" id="3.40.50.300">
    <property type="entry name" value="P-loop containing nucleotide triphosphate hydrolases"/>
    <property type="match status" value="2"/>
</dbReference>
<dbReference type="Gene3D" id="3.90.1440.10">
    <property type="entry name" value="SecA, preprotein cross-linking domain"/>
    <property type="match status" value="1"/>
</dbReference>
<dbReference type="HAMAP" id="MF_01382">
    <property type="entry name" value="SecA"/>
    <property type="match status" value="1"/>
</dbReference>
<dbReference type="InterPro" id="IPR014001">
    <property type="entry name" value="Helicase_ATP-bd"/>
</dbReference>
<dbReference type="InterPro" id="IPR027417">
    <property type="entry name" value="P-loop_NTPase"/>
</dbReference>
<dbReference type="InterPro" id="IPR000185">
    <property type="entry name" value="SecA"/>
</dbReference>
<dbReference type="InterPro" id="IPR020937">
    <property type="entry name" value="SecA_CS"/>
</dbReference>
<dbReference type="InterPro" id="IPR011115">
    <property type="entry name" value="SecA_DEAD"/>
</dbReference>
<dbReference type="InterPro" id="IPR014018">
    <property type="entry name" value="SecA_motor_DEAD"/>
</dbReference>
<dbReference type="InterPro" id="IPR011130">
    <property type="entry name" value="SecA_preprotein_X-link_dom"/>
</dbReference>
<dbReference type="InterPro" id="IPR044722">
    <property type="entry name" value="SecA_SF2_C"/>
</dbReference>
<dbReference type="InterPro" id="IPR011116">
    <property type="entry name" value="SecA_Wing/Scaffold"/>
</dbReference>
<dbReference type="InterPro" id="IPR036266">
    <property type="entry name" value="SecA_Wing/Scaffold_sf"/>
</dbReference>
<dbReference type="InterPro" id="IPR036670">
    <property type="entry name" value="SecA_X-link_sf"/>
</dbReference>
<dbReference type="NCBIfam" id="TIGR00963">
    <property type="entry name" value="secA"/>
    <property type="match status" value="1"/>
</dbReference>
<dbReference type="PANTHER" id="PTHR30612:SF0">
    <property type="entry name" value="CHLOROPLAST PROTEIN-TRANSPORTING ATPASE"/>
    <property type="match status" value="1"/>
</dbReference>
<dbReference type="PANTHER" id="PTHR30612">
    <property type="entry name" value="SECA INNER MEMBRANE COMPONENT OF SEC PROTEIN SECRETION SYSTEM"/>
    <property type="match status" value="1"/>
</dbReference>
<dbReference type="Pfam" id="PF21090">
    <property type="entry name" value="P-loop_SecA"/>
    <property type="match status" value="1"/>
</dbReference>
<dbReference type="Pfam" id="PF07517">
    <property type="entry name" value="SecA_DEAD"/>
    <property type="match status" value="1"/>
</dbReference>
<dbReference type="Pfam" id="PF01043">
    <property type="entry name" value="SecA_PP_bind"/>
    <property type="match status" value="1"/>
</dbReference>
<dbReference type="Pfam" id="PF07516">
    <property type="entry name" value="SecA_SW"/>
    <property type="match status" value="1"/>
</dbReference>
<dbReference type="PRINTS" id="PR00906">
    <property type="entry name" value="SECA"/>
</dbReference>
<dbReference type="SMART" id="SM00957">
    <property type="entry name" value="SecA_DEAD"/>
    <property type="match status" value="1"/>
</dbReference>
<dbReference type="SMART" id="SM00958">
    <property type="entry name" value="SecA_PP_bind"/>
    <property type="match status" value="1"/>
</dbReference>
<dbReference type="SUPFAM" id="SSF81886">
    <property type="entry name" value="Helical scaffold and wing domains of SecA"/>
    <property type="match status" value="1"/>
</dbReference>
<dbReference type="SUPFAM" id="SSF52540">
    <property type="entry name" value="P-loop containing nucleoside triphosphate hydrolases"/>
    <property type="match status" value="2"/>
</dbReference>
<dbReference type="SUPFAM" id="SSF81767">
    <property type="entry name" value="Pre-protein crosslinking domain of SecA"/>
    <property type="match status" value="1"/>
</dbReference>
<dbReference type="PROSITE" id="PS01312">
    <property type="entry name" value="SECA"/>
    <property type="match status" value="1"/>
</dbReference>
<dbReference type="PROSITE" id="PS51196">
    <property type="entry name" value="SECA_MOTOR_DEAD"/>
    <property type="match status" value="1"/>
</dbReference>
<feature type="chain" id="PRO_0000318480" description="Protein translocase subunit SecA">
    <location>
        <begin position="1"/>
        <end position="936"/>
    </location>
</feature>
<feature type="binding site" evidence="1">
    <location>
        <position position="90"/>
    </location>
    <ligand>
        <name>ATP</name>
        <dbReference type="ChEBI" id="CHEBI:30616"/>
    </ligand>
</feature>
<feature type="binding site" evidence="1">
    <location>
        <begin position="108"/>
        <end position="112"/>
    </location>
    <ligand>
        <name>ATP</name>
        <dbReference type="ChEBI" id="CHEBI:30616"/>
    </ligand>
</feature>
<feature type="binding site" evidence="1">
    <location>
        <position position="499"/>
    </location>
    <ligand>
        <name>ATP</name>
        <dbReference type="ChEBI" id="CHEBI:30616"/>
    </ligand>
</feature>
<proteinExistence type="inferred from homology"/>
<name>SECA_TRIEI</name>
<reference key="1">
    <citation type="journal article" date="2015" name="Proc. Natl. Acad. Sci. U.S.A.">
        <title>Trichodesmium genome maintains abundant, widespread noncoding DNA in situ, despite oligotrophic lifestyle.</title>
        <authorList>
            <person name="Walworth N."/>
            <person name="Pfreundt U."/>
            <person name="Nelson W.C."/>
            <person name="Mincer T."/>
            <person name="Heidelberg J.F."/>
            <person name="Fu F."/>
            <person name="Waterbury J.B."/>
            <person name="Glavina del Rio T."/>
            <person name="Goodwin L."/>
            <person name="Kyrpides N.C."/>
            <person name="Land M.L."/>
            <person name="Woyke T."/>
            <person name="Hutchins D.A."/>
            <person name="Hess W.R."/>
            <person name="Webb E.A."/>
        </authorList>
    </citation>
    <scope>NUCLEOTIDE SEQUENCE [LARGE SCALE GENOMIC DNA]</scope>
    <source>
        <strain>IMS101</strain>
    </source>
</reference>
<sequence>MFKKLLGDPNARKLKKFQPWVTDINILEEDIQKLSDEELKAKTGEFRQALEKAKTKDEEKAILEEILPEAFAVVREAGKRVLSMRHFDVQLLGGIILHQGQIAEMKTGEGKTLVATLPAYLNGLTGKGVHVITVNDYLARRDAEWMGQVHRFLGLSVGLIQQGMNPEERKKNYTCDITYATNSEVGFDYLRDNMATNMEEVVQRPFNFCIIDEVDSVLVDEARTPLIISGQVERPSEKYIKAAEIAAALSKEKEHYEVDEKARNVLLSDEGFAEAEQLLAVQDLYNPEDPWAHFVFNALKAKELFIKDVNYIVRDDEVVIVDEFTGRVMPGRRWSDGLHQAIEAKERVDIQPETQTLATITYQNFFLLYPKLSGMTGTAKTEEAEFEKIYNLQVTIIPTNKPTGRKDLSDVVYKTEVGKWKSIAQECAEMHKEGRPVLVGTTSVEKSELLSRLLGEGKIPHQLLNAKPENVERESEIVAQAGRGGAVTIATNMAGRGTDIILGGNAEYMAKLKLREYLMPKVVKPEDDDGLGMVRVSGLKKSHVAKGFDPQQKVKTWKVSPQIFPVKLSQETEGMLKLAVNLAVKEWGERALPELVVEDKVAIAAEKAPTTEPVIEKLREVYNLIRQEYENYIEREHNQVVGCGGLHVIGTERHESRRIDNQLRGRAGRQGDPGSTRFFLSLEDNLLRIFGGDRVAGMMQAFGVEEDMPIESGLLTRSLEGAQKKVETYYYDMRKQVFEYDEVMNNQRRAIYAERRRVLEGRDLKEQVIKYAEQTMDDIVEAYINPELPSEEWELDKLVEKVKQFVYLLADLTPEQLFDLSMEDIRTFMHEQVRNAYDIKEAQVNQIRGGLMRDAERFFILQQIDTLWREHLQQMDALRESVGLRGYGQKDPLIEYKSEGYELFLDMMTDIRRNVVYSLFQFQPQPAVQTTAAETV</sequence>